<organism>
    <name type="scientific">Caenorhabditis elegans</name>
    <dbReference type="NCBI Taxonomy" id="6239"/>
    <lineage>
        <taxon>Eukaryota</taxon>
        <taxon>Metazoa</taxon>
        <taxon>Ecdysozoa</taxon>
        <taxon>Nematoda</taxon>
        <taxon>Chromadorea</taxon>
        <taxon>Rhabditida</taxon>
        <taxon>Rhabditina</taxon>
        <taxon>Rhabditomorpha</taxon>
        <taxon>Rhabditoidea</taxon>
        <taxon>Rhabditidae</taxon>
        <taxon>Peloderinae</taxon>
        <taxon>Caenorhabditis</taxon>
    </lineage>
</organism>
<sequence length="338" mass="38154">MVGTHPANLSELLDAVLKINEQTLDDNDSAKKQELQCHPMRQALFDVLCETKEKTVLTVRNQVDETPEDPQLMRLDNMLVAEGVAGPDKGGSLGSDASGGDQADYRQKLHQIRVLYNEELRKYEEACNEFTQHVRSLLKDQSQVRPIAHKEIERMVYIIQRKFNGIQVQLKQSTCEAVMILRSRFLDARRKRRNFSKQATEVLNEYFYGHLSNPYPSEEAKEDLARQCNITVSQVSNWFGNKRIRYKKNMAKAQEEASMYAAKKNAHVTLGGMAGNPYGMLPGAAAAAGLLNPYNPMNIPGQDTLHMGMPPFDLSVYNPQLMAAAQYQQQMDNADKNS</sequence>
<keyword id="KW-0238">DNA-binding</keyword>
<keyword id="KW-0371">Homeobox</keyword>
<keyword id="KW-0539">Nucleus</keyword>
<keyword id="KW-1185">Reference proteome</keyword>
<keyword id="KW-0804">Transcription</keyword>
<keyword id="KW-0805">Transcription regulation</keyword>
<gene>
    <name evidence="10" type="primary">ceh-20</name>
    <name evidence="10" type="ORF">F31E3.1</name>
</gene>
<comment type="function">
    <text evidence="3 4 5 6 7">Transcription factor that binds to the 5'-TGATNNAT(G/T)(G/A)-3' PBC/Hox lineage enhancer region of sem-2 to promote cell fate specification in the postembryonic mesoderm (also known as the M lineage) (PubMed:21307099). Required for the M lineage-specific expression of the transcription factor, mls-2 (PubMed:18316179). Required for asymmetric division of the T hypodermal cell, probably acting via the regulation of asymmetric expression of Meis protein psa-3 in concert with homeobox protein nob-1 and the Wnt-MAPK pathway (PubMed:16824957). Has a role in the mig-13 pathway to promote the guidance, migration and positioning of Q neuroblasts and their descendants along the anteroposterior body axis and the anterior migration of BDU interneurons (PubMed:15750187). Also required for normal vulval formation (PubMed:15750187). Plays a role in regulating gene expression in dopaminergic neurons, acting in midbody PDE neurons, and acting redundantly with ceh-40 in head neurons (PubMed:23788625). May activate dopamine pathway genes in concert with ETS domain-containing protein ast-1, and homeobox proteins ceh-43 and ceh-40 (PubMed:23788625).</text>
</comment>
<comment type="subunit">
    <text evidence="4">Interacts with Meis protein psa-3 (PubMed:16824957). Interacts with homeobox protein nob-1 (PubMed:16824957).</text>
</comment>
<comment type="interaction">
    <interactant intactId="EBI-2416925">
        <id>P41779</id>
    </interactant>
    <interactant intactId="EBI-319775">
        <id>Q9N5D6</id>
        <label>unc-62</label>
    </interactant>
    <organismsDiffer>false</organismsDiffer>
    <experiments>3</experiments>
</comment>
<comment type="subcellular location">
    <subcellularLocation>
        <location evidence="3 4 9">Nucleus</location>
    </subcellularLocation>
    <text evidence="4">Localized to the nucleus, in the T hypodermal cell, in a psa-3-dependent manner.</text>
</comment>
<comment type="tissue specificity">
    <text evidence="7">Expressed in head dopaminergic neurons.</text>
</comment>
<comment type="developmental stage">
    <text evidence="3 7">Expressed in QR and QL neuroblasts, P and V cells and all their respective descendents, M cells, BDU interneurons, ALM and HSM neurons, body wall muscles, I4, all ventral cord neurons and in a few unidentified neurons in the head behind the posterior bulb of the pharynx during the L1 stage of larval development (PubMed:15750187). Expressed in V cell descendents from the larval stage of development to adulthood (PubMed:15750187). Expressed in the midbody dopaminergic PDE neurons throughout life (PubMed:23788625).</text>
</comment>
<comment type="disruption phenotype">
    <text evidence="3 5">RNAi-mediated knockdown results in egg laying defects, abnormal migration of QR neuroblast lineage cells and vulval protrusions due to ectopic induction and defective morphogenesis of vulval precursors cells (PubMed:15750187). RNAi-mediated knockdown results in the absence of the transcription factor, mls-2, in the M lineage (PubMed:18316179).</text>
</comment>
<comment type="similarity">
    <text evidence="8">Belongs to the TALE/PBX homeobox family.</text>
</comment>
<evidence type="ECO:0000255" key="1">
    <source>
        <dbReference type="PROSITE-ProRule" id="PRU00108"/>
    </source>
</evidence>
<evidence type="ECO:0000255" key="2">
    <source>
        <dbReference type="PROSITE-ProRule" id="PRU01322"/>
    </source>
</evidence>
<evidence type="ECO:0000269" key="3">
    <source>
    </source>
</evidence>
<evidence type="ECO:0000269" key="4">
    <source>
    </source>
</evidence>
<evidence type="ECO:0000269" key="5">
    <source>
    </source>
</evidence>
<evidence type="ECO:0000269" key="6">
    <source>
    </source>
</evidence>
<evidence type="ECO:0000269" key="7">
    <source>
    </source>
</evidence>
<evidence type="ECO:0000305" key="8"/>
<evidence type="ECO:0000305" key="9">
    <source>
    </source>
</evidence>
<evidence type="ECO:0000312" key="10">
    <source>
        <dbReference type="WormBase" id="F31E3.1"/>
    </source>
</evidence>
<reference key="1">
    <citation type="submission" date="1993-09" db="EMBL/GenBank/DDBJ databases">
        <authorList>
            <person name="Buerglin T.R."/>
            <person name="Lai E."/>
            <person name="Ruvkun G."/>
        </authorList>
    </citation>
    <scope>NUCLEOTIDE SEQUENCE [MRNA]</scope>
    <source>
        <strain>Bristol N2</strain>
    </source>
</reference>
<reference key="2">
    <citation type="journal article" date="1998" name="Science">
        <title>Genome sequence of the nematode C. elegans: a platform for investigating biology.</title>
        <authorList>
            <consortium name="The C. elegans sequencing consortium"/>
        </authorList>
    </citation>
    <scope>NUCLEOTIDE SEQUENCE [LARGE SCALE GENOMIC DNA]</scope>
    <source>
        <strain>Bristol N2</strain>
    </source>
</reference>
<reference key="3">
    <citation type="journal article" date="1992" name="Nat. Genet.">
        <title>New motif in PBX genes.</title>
        <authorList>
            <person name="Burglin T.R."/>
            <person name="Ruvkun G."/>
        </authorList>
    </citation>
    <scope>DISCUSSION OF SEQUENCE</scope>
</reference>
<reference key="4">
    <citation type="journal article" date="2005" name="Development">
        <title>The roles of two C. elegans HOX co-factor orthologs in cell migration and vulva development.</title>
        <authorList>
            <person name="Yang L."/>
            <person name="Sym M."/>
            <person name="Kenyon C."/>
        </authorList>
    </citation>
    <scope>FUNCTION</scope>
    <scope>SUBCELLULAR LOCATION</scope>
    <scope>DEVELOPMENTAL STAGE</scope>
    <scope>DISRUPTION PHENOTYPE</scope>
    <scope>MUTAGENESIS OF ARG-245</scope>
</reference>
<reference key="5">
    <citation type="journal article" date="2006" name="Dev. Cell">
        <title>Wnt signaling and a Hox protein cooperatively regulate psa-3/Meis to determine daughter cell fate after asymmetric cell division in C. elegans.</title>
        <authorList>
            <person name="Arata Y."/>
            <person name="Kouike H."/>
            <person name="Zhang Y."/>
            <person name="Herman M.A."/>
            <person name="Okano H."/>
            <person name="Sawa H."/>
        </authorList>
    </citation>
    <scope>FUNCTION</scope>
    <scope>INTERACTION WITH PSA-3 AND NOB-1</scope>
    <scope>SUBCELLULAR LOCATION</scope>
</reference>
<reference key="6">
    <citation type="journal article" date="2008" name="Mech. Dev.">
        <title>Mesodermal expression of the C. elegans HMX homolog mls-2 requires the PBC homolog CEH-20.</title>
        <authorList>
            <person name="Jiang Y."/>
            <person name="Shi H."/>
            <person name="Amin N.M."/>
            <person name="Sultan I."/>
            <person name="Liu J."/>
        </authorList>
    </citation>
    <scope>FUNCTION</scope>
    <scope>DISRUPTION PHENOTYPE</scope>
</reference>
<reference key="7">
    <citation type="journal article" date="2011" name="Development">
        <title>The C. elegans SoxC protein SEM-2 opposes differentiation factors to promote a proliferative blast cell fate in the postembryonic mesoderm.</title>
        <authorList>
            <person name="Tian C."/>
            <person name="Shi H."/>
            <person name="Colledge C."/>
            <person name="Stern M."/>
            <person name="Waterston R."/>
            <person name="Liu J."/>
        </authorList>
    </citation>
    <scope>FUNCTION</scope>
    <scope>SUBCELLULAR LOCATION</scope>
</reference>
<reference key="8">
    <citation type="journal article" date="2013" name="Genes Dev.">
        <title>A combinatorial regulatory signature controls terminal differentiation of the dopaminergic nervous system in C. elegans.</title>
        <authorList>
            <person name="Doitsidou M."/>
            <person name="Flames N."/>
            <person name="Topalidou I."/>
            <person name="Abe N."/>
            <person name="Felton T."/>
            <person name="Remesal L."/>
            <person name="Popovitchenko T."/>
            <person name="Mann R."/>
            <person name="Chalfie M."/>
            <person name="Hobert O."/>
        </authorList>
    </citation>
    <scope>FUNCTION</scope>
    <scope>TISSUE SPECIFICITY</scope>
    <scope>DEVELOPMENTAL STAGE</scope>
    <scope>MUTAGENESIS OF 102-GLN--SER-338; PRO-214 AND ARG-245</scope>
</reference>
<dbReference type="EMBL" id="U01303">
    <property type="protein sequence ID" value="AAC46471.1"/>
    <property type="molecule type" value="mRNA"/>
</dbReference>
<dbReference type="EMBL" id="BX284603">
    <property type="protein sequence ID" value="CCD63401.1"/>
    <property type="molecule type" value="Genomic_DNA"/>
</dbReference>
<dbReference type="PIR" id="T16221">
    <property type="entry name" value="T16221"/>
</dbReference>
<dbReference type="RefSeq" id="NP_001022555.1">
    <property type="nucleotide sequence ID" value="NM_001027384.7"/>
</dbReference>
<dbReference type="SMR" id="P41779"/>
<dbReference type="BioGRID" id="532863">
    <property type="interactions" value="3"/>
</dbReference>
<dbReference type="FunCoup" id="P41779">
    <property type="interactions" value="2833"/>
</dbReference>
<dbReference type="IntAct" id="P41779">
    <property type="interactions" value="2"/>
</dbReference>
<dbReference type="STRING" id="6239.F31E3.1.1"/>
<dbReference type="PaxDb" id="6239-F31E3.1"/>
<dbReference type="PeptideAtlas" id="P41779"/>
<dbReference type="EnsemblMetazoa" id="F31E3.1.1">
    <property type="protein sequence ID" value="F31E3.1.1"/>
    <property type="gene ID" value="WBGene00000443"/>
</dbReference>
<dbReference type="GeneID" id="3565545"/>
<dbReference type="KEGG" id="cel:CELE_F31E3.1"/>
<dbReference type="UCSC" id="F31E3.1">
    <property type="organism name" value="c. elegans"/>
</dbReference>
<dbReference type="AGR" id="WB:WBGene00000443"/>
<dbReference type="CTD" id="3565545"/>
<dbReference type="WormBase" id="F31E3.1">
    <property type="protein sequence ID" value="CE01241"/>
    <property type="gene ID" value="WBGene00000443"/>
    <property type="gene designation" value="ceh-20"/>
</dbReference>
<dbReference type="eggNOG" id="KOG0774">
    <property type="taxonomic scope" value="Eukaryota"/>
</dbReference>
<dbReference type="GeneTree" id="ENSGT00940000169272"/>
<dbReference type="HOGENOM" id="CLU_041153_0_0_1"/>
<dbReference type="InParanoid" id="P41779"/>
<dbReference type="OMA" id="DLARQCN"/>
<dbReference type="OrthoDB" id="4187154at2759"/>
<dbReference type="PhylomeDB" id="P41779"/>
<dbReference type="PRO" id="PR:P41779"/>
<dbReference type="Proteomes" id="UP000001940">
    <property type="component" value="Chromosome III"/>
</dbReference>
<dbReference type="Bgee" id="WBGene00000443">
    <property type="expression patterns" value="Expressed in pharyngeal muscle cell (C elegans) and 4 other cell types or tissues"/>
</dbReference>
<dbReference type="GO" id="GO:0005634">
    <property type="term" value="C:nucleus"/>
    <property type="evidence" value="ECO:0000314"/>
    <property type="project" value="WormBase"/>
</dbReference>
<dbReference type="GO" id="GO:0090575">
    <property type="term" value="C:RNA polymerase II transcription regulator complex"/>
    <property type="evidence" value="ECO:0000314"/>
    <property type="project" value="WormBase"/>
</dbReference>
<dbReference type="GO" id="GO:0000987">
    <property type="term" value="F:cis-regulatory region sequence-specific DNA binding"/>
    <property type="evidence" value="ECO:0000314"/>
    <property type="project" value="UniProtKB"/>
</dbReference>
<dbReference type="GO" id="GO:0003677">
    <property type="term" value="F:DNA binding"/>
    <property type="evidence" value="ECO:0000304"/>
    <property type="project" value="WormBase"/>
</dbReference>
<dbReference type="GO" id="GO:0000981">
    <property type="term" value="F:DNA-binding transcription factor activity, RNA polymerase II-specific"/>
    <property type="evidence" value="ECO:0007669"/>
    <property type="project" value="InterPro"/>
</dbReference>
<dbReference type="GO" id="GO:0001223">
    <property type="term" value="F:transcription coactivator binding"/>
    <property type="evidence" value="ECO:0000353"/>
    <property type="project" value="WormBase"/>
</dbReference>
<dbReference type="GO" id="GO:0009887">
    <property type="term" value="P:animal organ morphogenesis"/>
    <property type="evidence" value="ECO:0000318"/>
    <property type="project" value="GO_Central"/>
</dbReference>
<dbReference type="GO" id="GO:0009952">
    <property type="term" value="P:anterior/posterior pattern specification"/>
    <property type="evidence" value="ECO:0000304"/>
    <property type="project" value="WormBase"/>
</dbReference>
<dbReference type="GO" id="GO:0071542">
    <property type="term" value="P:dopaminergic neuron differentiation"/>
    <property type="evidence" value="ECO:0000315"/>
    <property type="project" value="UniProtKB"/>
</dbReference>
<dbReference type="GO" id="GO:0048568">
    <property type="term" value="P:embryonic organ development"/>
    <property type="evidence" value="ECO:0000318"/>
    <property type="project" value="GO_Central"/>
</dbReference>
<dbReference type="GO" id="GO:0007498">
    <property type="term" value="P:mesoderm development"/>
    <property type="evidence" value="ECO:0000315"/>
    <property type="project" value="WormBase"/>
</dbReference>
<dbReference type="GO" id="GO:0007501">
    <property type="term" value="P:mesodermal cell fate specification"/>
    <property type="evidence" value="ECO:0000316"/>
    <property type="project" value="WormBase"/>
</dbReference>
<dbReference type="GO" id="GO:0042692">
    <property type="term" value="P:muscle cell differentiation"/>
    <property type="evidence" value="ECO:0000316"/>
    <property type="project" value="WormBase"/>
</dbReference>
<dbReference type="GO" id="GO:0048666">
    <property type="term" value="P:neuron development"/>
    <property type="evidence" value="ECO:0000318"/>
    <property type="project" value="GO_Central"/>
</dbReference>
<dbReference type="GO" id="GO:0048665">
    <property type="term" value="P:neuron fate specification"/>
    <property type="evidence" value="ECO:0000316"/>
    <property type="project" value="UniProtKB"/>
</dbReference>
<dbReference type="GO" id="GO:0045893">
    <property type="term" value="P:positive regulation of DNA-templated transcription"/>
    <property type="evidence" value="ECO:0000314"/>
    <property type="project" value="UniProtKB"/>
</dbReference>
<dbReference type="GO" id="GO:0048337">
    <property type="term" value="P:positive regulation of mesodermal cell fate specification"/>
    <property type="evidence" value="ECO:0000315"/>
    <property type="project" value="UniProtKB"/>
</dbReference>
<dbReference type="GO" id="GO:0045944">
    <property type="term" value="P:positive regulation of transcription by RNA polymerase II"/>
    <property type="evidence" value="ECO:0000315"/>
    <property type="project" value="WormBase"/>
</dbReference>
<dbReference type="GO" id="GO:0009786">
    <property type="term" value="P:regulation of asymmetric cell division"/>
    <property type="evidence" value="ECO:0000315"/>
    <property type="project" value="WormBase"/>
</dbReference>
<dbReference type="CDD" id="cd00086">
    <property type="entry name" value="homeodomain"/>
    <property type="match status" value="1"/>
</dbReference>
<dbReference type="FunFam" id="1.10.10.60:FF:000008">
    <property type="entry name" value="Pre-B-cell leukemia transcription factor 1"/>
    <property type="match status" value="1"/>
</dbReference>
<dbReference type="Gene3D" id="1.10.10.60">
    <property type="entry name" value="Homeodomain-like"/>
    <property type="match status" value="1"/>
</dbReference>
<dbReference type="InterPro" id="IPR001356">
    <property type="entry name" value="HD"/>
</dbReference>
<dbReference type="InterPro" id="IPR017970">
    <property type="entry name" value="Homeobox_CS"/>
</dbReference>
<dbReference type="InterPro" id="IPR009057">
    <property type="entry name" value="Homeodomain-like_sf"/>
</dbReference>
<dbReference type="InterPro" id="IPR005542">
    <property type="entry name" value="PBX_PBC_dom"/>
</dbReference>
<dbReference type="InterPro" id="IPR050224">
    <property type="entry name" value="TALE_homeobox"/>
</dbReference>
<dbReference type="PANTHER" id="PTHR11850">
    <property type="entry name" value="HOMEOBOX PROTEIN TRANSCRIPTION FACTORS"/>
    <property type="match status" value="1"/>
</dbReference>
<dbReference type="Pfam" id="PF00046">
    <property type="entry name" value="Homeodomain"/>
    <property type="match status" value="1"/>
</dbReference>
<dbReference type="Pfam" id="PF03792">
    <property type="entry name" value="PBC"/>
    <property type="match status" value="1"/>
</dbReference>
<dbReference type="SMART" id="SM00389">
    <property type="entry name" value="HOX"/>
    <property type="match status" value="1"/>
</dbReference>
<dbReference type="SUPFAM" id="SSF46689">
    <property type="entry name" value="Homeodomain-like"/>
    <property type="match status" value="1"/>
</dbReference>
<dbReference type="PROSITE" id="PS00027">
    <property type="entry name" value="HOMEOBOX_1"/>
    <property type="match status" value="1"/>
</dbReference>
<dbReference type="PROSITE" id="PS50071">
    <property type="entry name" value="HOMEOBOX_2"/>
    <property type="match status" value="1"/>
</dbReference>
<dbReference type="PROSITE" id="PS51978">
    <property type="entry name" value="PBC"/>
    <property type="match status" value="1"/>
</dbReference>
<proteinExistence type="evidence at protein level"/>
<feature type="chain" id="PRO_0000048991" description="Homeobox protein ceh-20">
    <location>
        <begin position="1"/>
        <end position="338"/>
    </location>
</feature>
<feature type="domain" description="PBC" evidence="2">
    <location>
        <begin position="4"/>
        <end position="187"/>
    </location>
</feature>
<feature type="DNA-binding region" description="Homeobox; TALE-type" evidence="1">
    <location>
        <begin position="188"/>
        <end position="250"/>
    </location>
</feature>
<feature type="region of interest" description="PBC-A" evidence="2">
    <location>
        <begin position="11"/>
        <end position="91"/>
    </location>
</feature>
<feature type="region of interest" description="PBC-B" evidence="2">
    <location>
        <begin position="94"/>
        <end position="187"/>
    </location>
</feature>
<feature type="mutagenesis site" description="In ay38; loss of dopamine transporter dat-1 expression in midbody neurons (PDE)." evidence="7">
    <location>
        <begin position="102"/>
        <end position="338"/>
    </location>
</feature>
<feature type="mutagenesis site" description="In ay42; loss of dopamine transporter dat-1 expression in midbody neurons (PDE)." evidence="7">
    <original>P</original>
    <variation>L</variation>
    <location>
        <position position="214"/>
    </location>
</feature>
<feature type="mutagenesis site" description="In mu290; egg laying defects, abnormal migration of QR neuroblast lineage cells and BDU interneurons, and vulval protrusions. Loss of expression of dopamine pathway genes, including dopamine transporter dat-1, in midbody neurons (PDE)." evidence="3 7">
    <original>R</original>
    <variation>H</variation>
    <location>
        <position position="245"/>
    </location>
</feature>
<accession>P41779</accession>
<protein>
    <recommendedName>
        <fullName>Homeobox protein ceh-20</fullName>
    </recommendedName>
</protein>
<name>HM20_CAEEL</name>